<reference key="1">
    <citation type="journal article" date="2005" name="Genome Biol.">
        <title>Full-length cDNAs from chicken bursal lymphocytes to facilitate gene function analysis.</title>
        <authorList>
            <person name="Caldwell R.B."/>
            <person name="Kierzek A.M."/>
            <person name="Arakawa H."/>
            <person name="Bezzubov Y."/>
            <person name="Zaim J."/>
            <person name="Fiedler P."/>
            <person name="Kutter S."/>
            <person name="Blagodatski A."/>
            <person name="Kostovska D."/>
            <person name="Koter M."/>
            <person name="Plachy J."/>
            <person name="Carninci P."/>
            <person name="Hayashizaki Y."/>
            <person name="Buerstedde J.-M."/>
        </authorList>
    </citation>
    <scope>NUCLEOTIDE SEQUENCE [LARGE SCALE MRNA]</scope>
    <source>
        <strain>CB</strain>
        <tissue>Bursa of Fabricius</tissue>
    </source>
</reference>
<proteinExistence type="evidence at transcript level"/>
<sequence length="725" mass="83539">MVMKASVEDDDSGWELGMPDKMEKSNTDWVDITQDFEEACRELKLGELLHDKLFGLFEAMSAIEMMDPKMDAGMIGNQVNRKVLNFEQAIKDGTIKIKDLTSPELIGIMDTCFCCLITWLEGHSLAQTVFTCLYIHNPDFIEDPAMKAFALGILKICDIAREKVNKAAVFEEEDFQSMTYGFKMANSVTDLRVTGMLKDVEDDMQRRVKSTRSRQGEERDPEVELEHQQCLAVFSRVKFTRVLLTVLIAFTKKETSAVAEAQELMTQAADLLSAIHNSCIHGIQAQNDTTKGDHPIMMGFEPLVNQRLLPPTFPRYAKIIKREEMVNYFSKLIDRIKTVCEVVNLTNLHCILDFFCEFSEQSPCVLSRSLLQTTFLVDNKKVFGTHLMQDMVKDALRSFVSPPVLSPKCCLYNNHQAKDYIDSFVTHCVRPFCSLIQIHGHNRARQRDKLGHILEEFATLQDEAEKVDAALHSMLLKQEPQRQHLACLGTWVLYHNLRIMIQYLLSGFELELYSMHEYYYIYWYLSEFLYAWLMSTLSRADSSQMAEERIMEEQQKGRSSKKTKKKKKVRPLSREITMSQAYQNMCAGMYKTMIAFDMDGKVRKPKFELDSEQVRYEHRFAPFNSVITPPPVHYLQFKEMSDLNKYSPPPQSADLYMAASKHFQQAKMILENIPNPDHEVNRILKVAKPNIVVMKLLAGGHKKDSKVPPEFDFSPHKYFPVVKLV</sequence>
<evidence type="ECO:0000250" key="1">
    <source>
        <dbReference type="UniProtKB" id="Q5VZE5"/>
    </source>
</evidence>
<evidence type="ECO:0000256" key="2">
    <source>
        <dbReference type="SAM" id="MobiDB-lite"/>
    </source>
</evidence>
<evidence type="ECO:0000305" key="3"/>
<keyword id="KW-0963">Cytoplasm</keyword>
<keyword id="KW-1185">Reference proteome</keyword>
<accession>Q5ZHV2</accession>
<dbReference type="EMBL" id="AJ721032">
    <property type="protein sequence ID" value="CAG32691.1"/>
    <property type="molecule type" value="mRNA"/>
</dbReference>
<dbReference type="SMR" id="Q5ZHV2"/>
<dbReference type="FunCoup" id="Q5ZHV2">
    <property type="interactions" value="2943"/>
</dbReference>
<dbReference type="STRING" id="9031.ENSGALP00000071992"/>
<dbReference type="PaxDb" id="9031-ENSGALP00000020543"/>
<dbReference type="VEuPathDB" id="HostDB:geneid_427461"/>
<dbReference type="eggNOG" id="KOG2343">
    <property type="taxonomic scope" value="Eukaryota"/>
</dbReference>
<dbReference type="InParanoid" id="Q5ZHV2"/>
<dbReference type="OrthoDB" id="269405at2759"/>
<dbReference type="PhylomeDB" id="Q5ZHV2"/>
<dbReference type="Proteomes" id="UP000000539">
    <property type="component" value="Unassembled WGS sequence"/>
</dbReference>
<dbReference type="GO" id="GO:0005737">
    <property type="term" value="C:cytoplasm"/>
    <property type="evidence" value="ECO:0000250"/>
    <property type="project" value="UniProtKB"/>
</dbReference>
<dbReference type="GO" id="GO:0031417">
    <property type="term" value="C:NatC complex"/>
    <property type="evidence" value="ECO:0000250"/>
    <property type="project" value="UniProtKB"/>
</dbReference>
<dbReference type="GO" id="GO:0043066">
    <property type="term" value="P:negative regulation of apoptotic process"/>
    <property type="evidence" value="ECO:0000250"/>
    <property type="project" value="UniProtKB"/>
</dbReference>
<dbReference type="GO" id="GO:0048659">
    <property type="term" value="P:smooth muscle cell proliferation"/>
    <property type="evidence" value="ECO:0000250"/>
    <property type="project" value="UniProtKB"/>
</dbReference>
<dbReference type="InterPro" id="IPR007244">
    <property type="entry name" value="Naa35/Mak10"/>
</dbReference>
<dbReference type="PANTHER" id="PTHR21373">
    <property type="entry name" value="GLUCOSE REPRESSIBLE PROTEIN MAK10"/>
    <property type="match status" value="1"/>
</dbReference>
<dbReference type="PANTHER" id="PTHR21373:SF0">
    <property type="entry name" value="N-ALPHA-ACETYLTRANSFERASE 35, NATC AUXILIARY SUBUNIT"/>
    <property type="match status" value="1"/>
</dbReference>
<dbReference type="Pfam" id="PF04112">
    <property type="entry name" value="Mak10"/>
    <property type="match status" value="2"/>
</dbReference>
<gene>
    <name type="primary">NAA35</name>
    <name type="synonym">MAK10</name>
    <name type="ORF">RCJMB04_32o21</name>
</gene>
<name>NAA35_CHICK</name>
<organism>
    <name type="scientific">Gallus gallus</name>
    <name type="common">Chicken</name>
    <dbReference type="NCBI Taxonomy" id="9031"/>
    <lineage>
        <taxon>Eukaryota</taxon>
        <taxon>Metazoa</taxon>
        <taxon>Chordata</taxon>
        <taxon>Craniata</taxon>
        <taxon>Vertebrata</taxon>
        <taxon>Euteleostomi</taxon>
        <taxon>Archelosauria</taxon>
        <taxon>Archosauria</taxon>
        <taxon>Dinosauria</taxon>
        <taxon>Saurischia</taxon>
        <taxon>Theropoda</taxon>
        <taxon>Coelurosauria</taxon>
        <taxon>Aves</taxon>
        <taxon>Neognathae</taxon>
        <taxon>Galloanserae</taxon>
        <taxon>Galliformes</taxon>
        <taxon>Phasianidae</taxon>
        <taxon>Phasianinae</taxon>
        <taxon>Gallus</taxon>
    </lineage>
</organism>
<protein>
    <recommendedName>
        <fullName>N-alpha-acetyltransferase 35, NatC auxiliary subunit</fullName>
    </recommendedName>
    <alternativeName>
        <fullName>Protein MAK10 homolog</fullName>
    </alternativeName>
</protein>
<comment type="function">
    <text evidence="1">Auxillary component of the N-terminal acetyltransferase C (NatC) complex which catalyzes acetylation of N-terminal methionine residues (By similarity). N-terminal acetylation protects proteins from ubiquitination and degradation by the N-end rule pathway (By similarity).</text>
</comment>
<comment type="subunit">
    <text evidence="1">Component of the N-terminal acetyltransferase C (NatC) complex.</text>
</comment>
<comment type="subcellular location">
    <subcellularLocation>
        <location evidence="1">Cytoplasm</location>
    </subcellularLocation>
</comment>
<comment type="similarity">
    <text evidence="3">Belongs to the MAK10 family.</text>
</comment>
<feature type="chain" id="PRO_0000308619" description="N-alpha-acetyltransferase 35, NatC auxiliary subunit">
    <location>
        <begin position="1"/>
        <end position="725"/>
    </location>
</feature>
<feature type="region of interest" description="Disordered" evidence="2">
    <location>
        <begin position="548"/>
        <end position="573"/>
    </location>
</feature>
<feature type="compositionally biased region" description="Basic residues" evidence="2">
    <location>
        <begin position="558"/>
        <end position="571"/>
    </location>
</feature>